<sequence length="119" mass="13606">MIHGIGVDLIEIDRIQALYSKQPKLVERILTKNEQHKFNNFTHEQRKIEFLAGRFATKEAFSKALGTGLGKHVAFNDIDCYNDELGKPKIDYEGFIVHVSISHTEHYAMSQVVLEKSAF</sequence>
<keyword id="KW-0963">Cytoplasm</keyword>
<keyword id="KW-0275">Fatty acid biosynthesis</keyword>
<keyword id="KW-0276">Fatty acid metabolism</keyword>
<keyword id="KW-0444">Lipid biosynthesis</keyword>
<keyword id="KW-0443">Lipid metabolism</keyword>
<keyword id="KW-0460">Magnesium</keyword>
<keyword id="KW-0479">Metal-binding</keyword>
<keyword id="KW-0808">Transferase</keyword>
<reference key="1">
    <citation type="journal article" date="2006" name="Lancet">
        <title>Complete genome sequence of USA300, an epidemic clone of community-acquired meticillin-resistant Staphylococcus aureus.</title>
        <authorList>
            <person name="Diep B.A."/>
            <person name="Gill S.R."/>
            <person name="Chang R.F."/>
            <person name="Phan T.H."/>
            <person name="Chen J.H."/>
            <person name="Davidson M.G."/>
            <person name="Lin F."/>
            <person name="Lin J."/>
            <person name="Carleton H.A."/>
            <person name="Mongodin E.F."/>
            <person name="Sensabaugh G.F."/>
            <person name="Perdreau-Remington F."/>
        </authorList>
    </citation>
    <scope>NUCLEOTIDE SEQUENCE [LARGE SCALE GENOMIC DNA]</scope>
    <source>
        <strain>USA300</strain>
    </source>
</reference>
<name>ACPS_STAA3</name>
<gene>
    <name evidence="1" type="primary">acpS</name>
    <name type="ordered locus">SAUSA300_2028</name>
</gene>
<protein>
    <recommendedName>
        <fullName evidence="1">Holo-[acyl-carrier-protein] synthase</fullName>
        <shortName evidence="1">Holo-ACP synthase</shortName>
        <ecNumber evidence="1">2.7.8.7</ecNumber>
    </recommendedName>
    <alternativeName>
        <fullName evidence="1">4'-phosphopantetheinyl transferase AcpS</fullName>
    </alternativeName>
</protein>
<feature type="chain" id="PRO_1000008508" description="Holo-[acyl-carrier-protein] synthase">
    <location>
        <begin position="1"/>
        <end position="119"/>
    </location>
</feature>
<feature type="binding site" evidence="1">
    <location>
        <position position="8"/>
    </location>
    <ligand>
        <name>Mg(2+)</name>
        <dbReference type="ChEBI" id="CHEBI:18420"/>
    </ligand>
</feature>
<feature type="binding site" evidence="1">
    <location>
        <position position="59"/>
    </location>
    <ligand>
        <name>Mg(2+)</name>
        <dbReference type="ChEBI" id="CHEBI:18420"/>
    </ligand>
</feature>
<proteinExistence type="inferred from homology"/>
<comment type="function">
    <text evidence="1">Transfers the 4'-phosphopantetheine moiety from coenzyme A to a Ser of acyl-carrier-protein.</text>
</comment>
<comment type="catalytic activity">
    <reaction evidence="1">
        <text>apo-[ACP] + CoA = holo-[ACP] + adenosine 3',5'-bisphosphate + H(+)</text>
        <dbReference type="Rhea" id="RHEA:12068"/>
        <dbReference type="Rhea" id="RHEA-COMP:9685"/>
        <dbReference type="Rhea" id="RHEA-COMP:9690"/>
        <dbReference type="ChEBI" id="CHEBI:15378"/>
        <dbReference type="ChEBI" id="CHEBI:29999"/>
        <dbReference type="ChEBI" id="CHEBI:57287"/>
        <dbReference type="ChEBI" id="CHEBI:58343"/>
        <dbReference type="ChEBI" id="CHEBI:64479"/>
        <dbReference type="EC" id="2.7.8.7"/>
    </reaction>
</comment>
<comment type="cofactor">
    <cofactor evidence="1">
        <name>Mg(2+)</name>
        <dbReference type="ChEBI" id="CHEBI:18420"/>
    </cofactor>
</comment>
<comment type="subcellular location">
    <subcellularLocation>
        <location evidence="1">Cytoplasm</location>
    </subcellularLocation>
</comment>
<comment type="similarity">
    <text evidence="1">Belongs to the P-Pant transferase superfamily. AcpS family.</text>
</comment>
<dbReference type="EC" id="2.7.8.7" evidence="1"/>
<dbReference type="EMBL" id="CP000255">
    <property type="protein sequence ID" value="ABD20944.1"/>
    <property type="molecule type" value="Genomic_DNA"/>
</dbReference>
<dbReference type="RefSeq" id="WP_000581200.1">
    <property type="nucleotide sequence ID" value="NZ_CP027476.1"/>
</dbReference>
<dbReference type="SMR" id="Q2FF54"/>
<dbReference type="KEGG" id="saa:SAUSA300_2028"/>
<dbReference type="HOGENOM" id="CLU_089696_1_2_9"/>
<dbReference type="OMA" id="DERHYAV"/>
<dbReference type="Proteomes" id="UP000001939">
    <property type="component" value="Chromosome"/>
</dbReference>
<dbReference type="GO" id="GO:0005737">
    <property type="term" value="C:cytoplasm"/>
    <property type="evidence" value="ECO:0007669"/>
    <property type="project" value="UniProtKB-SubCell"/>
</dbReference>
<dbReference type="GO" id="GO:0008897">
    <property type="term" value="F:holo-[acyl-carrier-protein] synthase activity"/>
    <property type="evidence" value="ECO:0007669"/>
    <property type="project" value="UniProtKB-UniRule"/>
</dbReference>
<dbReference type="GO" id="GO:0000287">
    <property type="term" value="F:magnesium ion binding"/>
    <property type="evidence" value="ECO:0007669"/>
    <property type="project" value="UniProtKB-UniRule"/>
</dbReference>
<dbReference type="GO" id="GO:0006633">
    <property type="term" value="P:fatty acid biosynthetic process"/>
    <property type="evidence" value="ECO:0007669"/>
    <property type="project" value="UniProtKB-UniRule"/>
</dbReference>
<dbReference type="Gene3D" id="3.90.470.20">
    <property type="entry name" value="4'-phosphopantetheinyl transferase domain"/>
    <property type="match status" value="1"/>
</dbReference>
<dbReference type="HAMAP" id="MF_00101">
    <property type="entry name" value="AcpS"/>
    <property type="match status" value="1"/>
</dbReference>
<dbReference type="InterPro" id="IPR008278">
    <property type="entry name" value="4-PPantetheinyl_Trfase_dom"/>
</dbReference>
<dbReference type="InterPro" id="IPR037143">
    <property type="entry name" value="4-PPantetheinyl_Trfase_dom_sf"/>
</dbReference>
<dbReference type="InterPro" id="IPR002582">
    <property type="entry name" value="ACPS"/>
</dbReference>
<dbReference type="InterPro" id="IPR004568">
    <property type="entry name" value="Ppantetheine-prot_Trfase_dom"/>
</dbReference>
<dbReference type="NCBIfam" id="TIGR00516">
    <property type="entry name" value="acpS"/>
    <property type="match status" value="1"/>
</dbReference>
<dbReference type="NCBIfam" id="TIGR00556">
    <property type="entry name" value="pantethn_trn"/>
    <property type="match status" value="1"/>
</dbReference>
<dbReference type="Pfam" id="PF01648">
    <property type="entry name" value="ACPS"/>
    <property type="match status" value="1"/>
</dbReference>
<dbReference type="SUPFAM" id="SSF56214">
    <property type="entry name" value="4'-phosphopantetheinyl transferase"/>
    <property type="match status" value="1"/>
</dbReference>
<accession>Q2FF54</accession>
<organism>
    <name type="scientific">Staphylococcus aureus (strain USA300)</name>
    <dbReference type="NCBI Taxonomy" id="367830"/>
    <lineage>
        <taxon>Bacteria</taxon>
        <taxon>Bacillati</taxon>
        <taxon>Bacillota</taxon>
        <taxon>Bacilli</taxon>
        <taxon>Bacillales</taxon>
        <taxon>Staphylococcaceae</taxon>
        <taxon>Staphylococcus</taxon>
    </lineage>
</organism>
<evidence type="ECO:0000255" key="1">
    <source>
        <dbReference type="HAMAP-Rule" id="MF_00101"/>
    </source>
</evidence>